<comment type="function">
    <text evidence="1">Intracellular vesicle trafficking and protein transport.</text>
</comment>
<comment type="subcellular location">
    <subcellularLocation>
        <location evidence="3">Endosome membrane</location>
    </subcellularLocation>
    <subcellularLocation>
        <location evidence="5">Golgi apparatus</location>
        <location evidence="5">trans-Golgi network membrane</location>
        <topology evidence="5">Lipid-anchor</topology>
    </subcellularLocation>
    <text>During cytokinesis located to the growing margins of the cell plate.</text>
</comment>
<comment type="tissue specificity">
    <text evidence="3">Expressed in root tips.</text>
</comment>
<comment type="similarity">
    <text evidence="4">Belongs to the small GTPase superfamily. Rab family.</text>
</comment>
<name>RAA2A_ARATH</name>
<accession>O04486</accession>
<keyword id="KW-0967">Endosome</keyword>
<keyword id="KW-0333">Golgi apparatus</keyword>
<keyword id="KW-0342">GTP-binding</keyword>
<keyword id="KW-0449">Lipoprotein</keyword>
<keyword id="KW-0472">Membrane</keyword>
<keyword id="KW-0488">Methylation</keyword>
<keyword id="KW-0547">Nucleotide-binding</keyword>
<keyword id="KW-0564">Palmitate</keyword>
<keyword id="KW-0636">Prenylation</keyword>
<keyword id="KW-0653">Protein transport</keyword>
<keyword id="KW-1185">Reference proteome</keyword>
<keyword id="KW-0813">Transport</keyword>
<protein>
    <recommendedName>
        <fullName>Ras-related protein RABA2a</fullName>
        <shortName>AtRABA2a</shortName>
    </recommendedName>
    <alternativeName>
        <fullName>Ras-related protein Rab11C</fullName>
        <shortName>AtRab11C</shortName>
    </alternativeName>
</protein>
<feature type="chain" id="PRO_0000121165" description="Ras-related protein RABA2a">
    <location>
        <begin position="1"/>
        <end position="214"/>
    </location>
</feature>
<feature type="propeptide" id="PRO_0000370754" description="Removed in mature form" evidence="2">
    <location>
        <begin position="215"/>
        <end position="217"/>
    </location>
</feature>
<feature type="short sequence motif" description="Effector region" evidence="1">
    <location>
        <begin position="41"/>
        <end position="49"/>
    </location>
</feature>
<feature type="binding site" evidence="1">
    <location>
        <begin position="19"/>
        <end position="26"/>
    </location>
    <ligand>
        <name>GTP</name>
        <dbReference type="ChEBI" id="CHEBI:37565"/>
    </ligand>
</feature>
<feature type="binding site" evidence="1">
    <location>
        <begin position="67"/>
        <end position="71"/>
    </location>
    <ligand>
        <name>GTP</name>
        <dbReference type="ChEBI" id="CHEBI:37565"/>
    </ligand>
</feature>
<feature type="binding site" evidence="1">
    <location>
        <begin position="125"/>
        <end position="128"/>
    </location>
    <ligand>
        <name>GTP</name>
        <dbReference type="ChEBI" id="CHEBI:37565"/>
    </ligand>
</feature>
<feature type="binding site" evidence="1">
    <location>
        <begin position="155"/>
        <end position="156"/>
    </location>
    <ligand>
        <name>GTP</name>
        <dbReference type="ChEBI" id="CHEBI:37565"/>
    </ligand>
</feature>
<feature type="modified residue" description="Cysteine methyl ester" evidence="2">
    <location>
        <position position="214"/>
    </location>
</feature>
<feature type="lipid moiety-binding region" description="S-palmitoyl cysteine" evidence="1">
    <location>
        <position position="213"/>
    </location>
</feature>
<feature type="lipid moiety-binding region" description="S-geranylgeranyl cysteine" evidence="1">
    <location>
        <position position="214"/>
    </location>
</feature>
<proteinExistence type="evidence at transcript level"/>
<dbReference type="EMBL" id="U74669">
    <property type="protein sequence ID" value="AAB61994.1"/>
    <property type="molecule type" value="mRNA"/>
</dbReference>
<dbReference type="EMBL" id="AC000132">
    <property type="protein sequence ID" value="AAB60720.1"/>
    <property type="molecule type" value="Genomic_DNA"/>
</dbReference>
<dbReference type="EMBL" id="CP002684">
    <property type="protein sequence ID" value="AEE28471.1"/>
    <property type="molecule type" value="Genomic_DNA"/>
</dbReference>
<dbReference type="EMBL" id="AY045620">
    <property type="protein sequence ID" value="AAK73978.1"/>
    <property type="molecule type" value="mRNA"/>
</dbReference>
<dbReference type="EMBL" id="AY133657">
    <property type="protein sequence ID" value="AAM91487.1"/>
    <property type="molecule type" value="mRNA"/>
</dbReference>
<dbReference type="EMBL" id="AY085684">
    <property type="protein sequence ID" value="AAM62903.1"/>
    <property type="molecule type" value="mRNA"/>
</dbReference>
<dbReference type="PIR" id="A86230">
    <property type="entry name" value="A86230"/>
</dbReference>
<dbReference type="RefSeq" id="NP_172434.1">
    <property type="nucleotide sequence ID" value="NM_100835.3"/>
</dbReference>
<dbReference type="SMR" id="O04486"/>
<dbReference type="BioGRID" id="22731">
    <property type="interactions" value="3"/>
</dbReference>
<dbReference type="FunCoup" id="O04486">
    <property type="interactions" value="3103"/>
</dbReference>
<dbReference type="IntAct" id="O04486">
    <property type="interactions" value="4"/>
</dbReference>
<dbReference type="MINT" id="O04486"/>
<dbReference type="STRING" id="3702.O04486"/>
<dbReference type="iPTMnet" id="O04486"/>
<dbReference type="PaxDb" id="3702-AT1G09630.1"/>
<dbReference type="ProteomicsDB" id="236612"/>
<dbReference type="EnsemblPlants" id="AT1G09630.1">
    <property type="protein sequence ID" value="AT1G09630.1"/>
    <property type="gene ID" value="AT1G09630"/>
</dbReference>
<dbReference type="GeneID" id="837490"/>
<dbReference type="Gramene" id="AT1G09630.1">
    <property type="protein sequence ID" value="AT1G09630.1"/>
    <property type="gene ID" value="AT1G09630"/>
</dbReference>
<dbReference type="KEGG" id="ath:AT1G09630"/>
<dbReference type="Araport" id="AT1G09630"/>
<dbReference type="TAIR" id="AT1G09630">
    <property type="gene designation" value="RAB11C"/>
</dbReference>
<dbReference type="eggNOG" id="KOG0087">
    <property type="taxonomic scope" value="Eukaryota"/>
</dbReference>
<dbReference type="HOGENOM" id="CLU_041217_23_0_1"/>
<dbReference type="InParanoid" id="O04486"/>
<dbReference type="OMA" id="THKEDEY"/>
<dbReference type="OrthoDB" id="9989112at2759"/>
<dbReference type="PhylomeDB" id="O04486"/>
<dbReference type="PRO" id="PR:O04486"/>
<dbReference type="Proteomes" id="UP000006548">
    <property type="component" value="Chromosome 1"/>
</dbReference>
<dbReference type="ExpressionAtlas" id="O04486">
    <property type="expression patterns" value="baseline and differential"/>
</dbReference>
<dbReference type="GO" id="GO:0009504">
    <property type="term" value="C:cell plate"/>
    <property type="evidence" value="ECO:0000314"/>
    <property type="project" value="TAIR"/>
</dbReference>
<dbReference type="GO" id="GO:0005768">
    <property type="term" value="C:endosome"/>
    <property type="evidence" value="ECO:0000314"/>
    <property type="project" value="TAIR"/>
</dbReference>
<dbReference type="GO" id="GO:0010008">
    <property type="term" value="C:endosome membrane"/>
    <property type="evidence" value="ECO:0007669"/>
    <property type="project" value="UniProtKB-SubCell"/>
</dbReference>
<dbReference type="GO" id="GO:0005576">
    <property type="term" value="C:extracellular region"/>
    <property type="evidence" value="ECO:0007005"/>
    <property type="project" value="TAIR"/>
</dbReference>
<dbReference type="GO" id="GO:0005794">
    <property type="term" value="C:Golgi apparatus"/>
    <property type="evidence" value="ECO:0007669"/>
    <property type="project" value="UniProtKB-SubCell"/>
</dbReference>
<dbReference type="GO" id="GO:0005886">
    <property type="term" value="C:plasma membrane"/>
    <property type="evidence" value="ECO:0007005"/>
    <property type="project" value="TAIR"/>
</dbReference>
<dbReference type="GO" id="GO:0005525">
    <property type="term" value="F:GTP binding"/>
    <property type="evidence" value="ECO:0007669"/>
    <property type="project" value="UniProtKB-KW"/>
</dbReference>
<dbReference type="GO" id="GO:0003924">
    <property type="term" value="F:GTPase activity"/>
    <property type="evidence" value="ECO:0007669"/>
    <property type="project" value="InterPro"/>
</dbReference>
<dbReference type="GO" id="GO:0000911">
    <property type="term" value="P:cytokinesis by cell plate formation"/>
    <property type="evidence" value="ECO:0000315"/>
    <property type="project" value="TAIR"/>
</dbReference>
<dbReference type="GO" id="GO:0015031">
    <property type="term" value="P:protein transport"/>
    <property type="evidence" value="ECO:0007669"/>
    <property type="project" value="UniProtKB-KW"/>
</dbReference>
<dbReference type="CDD" id="cd01868">
    <property type="entry name" value="Rab11_like"/>
    <property type="match status" value="1"/>
</dbReference>
<dbReference type="FunFam" id="3.40.50.300:FF:000067">
    <property type="entry name" value="ras-related protein RABA1f"/>
    <property type="match status" value="1"/>
</dbReference>
<dbReference type="Gene3D" id="3.40.50.300">
    <property type="entry name" value="P-loop containing nucleotide triphosphate hydrolases"/>
    <property type="match status" value="1"/>
</dbReference>
<dbReference type="InterPro" id="IPR027417">
    <property type="entry name" value="P-loop_NTPase"/>
</dbReference>
<dbReference type="InterPro" id="IPR050209">
    <property type="entry name" value="Rab_GTPases_membrane_traffic"/>
</dbReference>
<dbReference type="InterPro" id="IPR005225">
    <property type="entry name" value="Small_GTP-bd"/>
</dbReference>
<dbReference type="InterPro" id="IPR001806">
    <property type="entry name" value="Small_GTPase"/>
</dbReference>
<dbReference type="NCBIfam" id="TIGR00231">
    <property type="entry name" value="small_GTP"/>
    <property type="match status" value="1"/>
</dbReference>
<dbReference type="PANTHER" id="PTHR47979">
    <property type="entry name" value="DRAB11-RELATED"/>
    <property type="match status" value="1"/>
</dbReference>
<dbReference type="Pfam" id="PF00071">
    <property type="entry name" value="Ras"/>
    <property type="match status" value="1"/>
</dbReference>
<dbReference type="PRINTS" id="PR00449">
    <property type="entry name" value="RASTRNSFRMNG"/>
</dbReference>
<dbReference type="SMART" id="SM00175">
    <property type="entry name" value="RAB"/>
    <property type="match status" value="1"/>
</dbReference>
<dbReference type="SMART" id="SM00176">
    <property type="entry name" value="RAN"/>
    <property type="match status" value="1"/>
</dbReference>
<dbReference type="SMART" id="SM00173">
    <property type="entry name" value="RAS"/>
    <property type="match status" value="1"/>
</dbReference>
<dbReference type="SMART" id="SM00174">
    <property type="entry name" value="RHO"/>
    <property type="match status" value="1"/>
</dbReference>
<dbReference type="SUPFAM" id="SSF52540">
    <property type="entry name" value="P-loop containing nucleoside triphosphate hydrolases"/>
    <property type="match status" value="1"/>
</dbReference>
<dbReference type="PROSITE" id="PS51419">
    <property type="entry name" value="RAB"/>
    <property type="match status" value="1"/>
</dbReference>
<gene>
    <name type="primary">RABA2A</name>
    <name type="synonym">RAB11C</name>
    <name type="ordered locus">At1g09630</name>
    <name type="ORF">F21M12.2</name>
</gene>
<organism>
    <name type="scientific">Arabidopsis thaliana</name>
    <name type="common">Mouse-ear cress</name>
    <dbReference type="NCBI Taxonomy" id="3702"/>
    <lineage>
        <taxon>Eukaryota</taxon>
        <taxon>Viridiplantae</taxon>
        <taxon>Streptophyta</taxon>
        <taxon>Embryophyta</taxon>
        <taxon>Tracheophyta</taxon>
        <taxon>Spermatophyta</taxon>
        <taxon>Magnoliopsida</taxon>
        <taxon>eudicotyledons</taxon>
        <taxon>Gunneridae</taxon>
        <taxon>Pentapetalae</taxon>
        <taxon>rosids</taxon>
        <taxon>malvids</taxon>
        <taxon>Brassicales</taxon>
        <taxon>Brassicaceae</taxon>
        <taxon>Camelineae</taxon>
        <taxon>Arabidopsis</taxon>
    </lineage>
</organism>
<evidence type="ECO:0000250" key="1"/>
<evidence type="ECO:0000255" key="2"/>
<evidence type="ECO:0000269" key="3">
    <source>
    </source>
</evidence>
<evidence type="ECO:0000305" key="4"/>
<evidence type="ECO:0000305" key="5">
    <source>
    </source>
</evidence>
<sequence length="217" mass="24108">MARRPDEEYDYLFKVVLIGDSGVGKSNLLSRFTRNEFCLESKSTIGVEFATRTLQVEGRTVKAQIWDTAGQERYRAITSAYYRGALGALLVYDVTKPTTFENVSRWLKELRDHADSNIVIMLIGNKTDLKHLRAVATEDAQSYAEKEGLSFIETSALEALNVEKAFQTILSEVYRIISKKSISSDQTTANANIKEGQTIDVAATSESNAKKPCCSSS</sequence>
<reference key="1">
    <citation type="submission" date="1997-07" db="EMBL/GenBank/DDBJ databases">
        <authorList>
            <person name="Bischoff F."/>
            <person name="Palme K."/>
        </authorList>
    </citation>
    <scope>NUCLEOTIDE SEQUENCE [MRNA]</scope>
    <source>
        <strain>cv. Columbia</strain>
    </source>
</reference>
<reference key="2">
    <citation type="journal article" date="2000" name="Nature">
        <title>Sequence and analysis of chromosome 1 of the plant Arabidopsis thaliana.</title>
        <authorList>
            <person name="Theologis A."/>
            <person name="Ecker J.R."/>
            <person name="Palm C.J."/>
            <person name="Federspiel N.A."/>
            <person name="Kaul S."/>
            <person name="White O."/>
            <person name="Alonso J."/>
            <person name="Altafi H."/>
            <person name="Araujo R."/>
            <person name="Bowman C.L."/>
            <person name="Brooks S.Y."/>
            <person name="Buehler E."/>
            <person name="Chan A."/>
            <person name="Chao Q."/>
            <person name="Chen H."/>
            <person name="Cheuk R.F."/>
            <person name="Chin C.W."/>
            <person name="Chung M.K."/>
            <person name="Conn L."/>
            <person name="Conway A.B."/>
            <person name="Conway A.R."/>
            <person name="Creasy T.H."/>
            <person name="Dewar K."/>
            <person name="Dunn P."/>
            <person name="Etgu P."/>
            <person name="Feldblyum T.V."/>
            <person name="Feng J.-D."/>
            <person name="Fong B."/>
            <person name="Fujii C.Y."/>
            <person name="Gill J.E."/>
            <person name="Goldsmith A.D."/>
            <person name="Haas B."/>
            <person name="Hansen N.F."/>
            <person name="Hughes B."/>
            <person name="Huizar L."/>
            <person name="Hunter J.L."/>
            <person name="Jenkins J."/>
            <person name="Johnson-Hopson C."/>
            <person name="Khan S."/>
            <person name="Khaykin E."/>
            <person name="Kim C.J."/>
            <person name="Koo H.L."/>
            <person name="Kremenetskaia I."/>
            <person name="Kurtz D.B."/>
            <person name="Kwan A."/>
            <person name="Lam B."/>
            <person name="Langin-Hooper S."/>
            <person name="Lee A."/>
            <person name="Lee J.M."/>
            <person name="Lenz C.A."/>
            <person name="Li J.H."/>
            <person name="Li Y.-P."/>
            <person name="Lin X."/>
            <person name="Liu S.X."/>
            <person name="Liu Z.A."/>
            <person name="Luros J.S."/>
            <person name="Maiti R."/>
            <person name="Marziali A."/>
            <person name="Militscher J."/>
            <person name="Miranda M."/>
            <person name="Nguyen M."/>
            <person name="Nierman W.C."/>
            <person name="Osborne B.I."/>
            <person name="Pai G."/>
            <person name="Peterson J."/>
            <person name="Pham P.K."/>
            <person name="Rizzo M."/>
            <person name="Rooney T."/>
            <person name="Rowley D."/>
            <person name="Sakano H."/>
            <person name="Salzberg S.L."/>
            <person name="Schwartz J.R."/>
            <person name="Shinn P."/>
            <person name="Southwick A.M."/>
            <person name="Sun H."/>
            <person name="Tallon L.J."/>
            <person name="Tambunga G."/>
            <person name="Toriumi M.J."/>
            <person name="Town C.D."/>
            <person name="Utterback T."/>
            <person name="Van Aken S."/>
            <person name="Vaysberg M."/>
            <person name="Vysotskaia V.S."/>
            <person name="Walker M."/>
            <person name="Wu D."/>
            <person name="Yu G."/>
            <person name="Fraser C.M."/>
            <person name="Venter J.C."/>
            <person name="Davis R.W."/>
        </authorList>
    </citation>
    <scope>NUCLEOTIDE SEQUENCE [LARGE SCALE GENOMIC DNA]</scope>
    <source>
        <strain>cv. Columbia</strain>
    </source>
</reference>
<reference key="3">
    <citation type="journal article" date="2017" name="Plant J.">
        <title>Araport11: a complete reannotation of the Arabidopsis thaliana reference genome.</title>
        <authorList>
            <person name="Cheng C.Y."/>
            <person name="Krishnakumar V."/>
            <person name="Chan A.P."/>
            <person name="Thibaud-Nissen F."/>
            <person name="Schobel S."/>
            <person name="Town C.D."/>
        </authorList>
    </citation>
    <scope>GENOME REANNOTATION</scope>
    <source>
        <strain>cv. Columbia</strain>
    </source>
</reference>
<reference key="4">
    <citation type="journal article" date="2003" name="Science">
        <title>Empirical analysis of transcriptional activity in the Arabidopsis genome.</title>
        <authorList>
            <person name="Yamada K."/>
            <person name="Lim J."/>
            <person name="Dale J.M."/>
            <person name="Chen H."/>
            <person name="Shinn P."/>
            <person name="Palm C.J."/>
            <person name="Southwick A.M."/>
            <person name="Wu H.C."/>
            <person name="Kim C.J."/>
            <person name="Nguyen M."/>
            <person name="Pham P.K."/>
            <person name="Cheuk R.F."/>
            <person name="Karlin-Newmann G."/>
            <person name="Liu S.X."/>
            <person name="Lam B."/>
            <person name="Sakano H."/>
            <person name="Wu T."/>
            <person name="Yu G."/>
            <person name="Miranda M."/>
            <person name="Quach H.L."/>
            <person name="Tripp M."/>
            <person name="Chang C.H."/>
            <person name="Lee J.M."/>
            <person name="Toriumi M.J."/>
            <person name="Chan M.M."/>
            <person name="Tang C.C."/>
            <person name="Onodera C.S."/>
            <person name="Deng J.M."/>
            <person name="Akiyama K."/>
            <person name="Ansari Y."/>
            <person name="Arakawa T."/>
            <person name="Banh J."/>
            <person name="Banno F."/>
            <person name="Bowser L."/>
            <person name="Brooks S.Y."/>
            <person name="Carninci P."/>
            <person name="Chao Q."/>
            <person name="Choy N."/>
            <person name="Enju A."/>
            <person name="Goldsmith A.D."/>
            <person name="Gurjal M."/>
            <person name="Hansen N.F."/>
            <person name="Hayashizaki Y."/>
            <person name="Johnson-Hopson C."/>
            <person name="Hsuan V.W."/>
            <person name="Iida K."/>
            <person name="Karnes M."/>
            <person name="Khan S."/>
            <person name="Koesema E."/>
            <person name="Ishida J."/>
            <person name="Jiang P.X."/>
            <person name="Jones T."/>
            <person name="Kawai J."/>
            <person name="Kamiya A."/>
            <person name="Meyers C."/>
            <person name="Nakajima M."/>
            <person name="Narusaka M."/>
            <person name="Seki M."/>
            <person name="Sakurai T."/>
            <person name="Satou M."/>
            <person name="Tamse R."/>
            <person name="Vaysberg M."/>
            <person name="Wallender E.K."/>
            <person name="Wong C."/>
            <person name="Yamamura Y."/>
            <person name="Yuan S."/>
            <person name="Shinozaki K."/>
            <person name="Davis R.W."/>
            <person name="Theologis A."/>
            <person name="Ecker J.R."/>
        </authorList>
    </citation>
    <scope>NUCLEOTIDE SEQUENCE [LARGE SCALE MRNA]</scope>
    <source>
        <strain>cv. Columbia</strain>
    </source>
</reference>
<reference key="5">
    <citation type="submission" date="2002-03" db="EMBL/GenBank/DDBJ databases">
        <title>Full-length cDNA from Arabidopsis thaliana.</title>
        <authorList>
            <person name="Brover V.V."/>
            <person name="Troukhan M.E."/>
            <person name="Alexandrov N.A."/>
            <person name="Lu Y.-P."/>
            <person name="Flavell R.B."/>
            <person name="Feldmann K.A."/>
        </authorList>
    </citation>
    <scope>NUCLEOTIDE SEQUENCE [LARGE SCALE MRNA]</scope>
</reference>
<reference key="6">
    <citation type="journal article" date="2003" name="Plant Physiol.">
        <title>Analysis of the small GTPase gene superfamily of Arabidopsis.</title>
        <authorList>
            <person name="Vernoud V."/>
            <person name="Horton A.C."/>
            <person name="Yang Z."/>
            <person name="Nielsen E."/>
        </authorList>
    </citation>
    <scope>GENE FAMILY</scope>
    <scope>NOMENCLATURE</scope>
</reference>
<reference key="7">
    <citation type="journal article" date="2008" name="Plant Cell">
        <title>Rab-A2 and Rab-A3 GTPases define a trans-Golgi endosomal membrane domain in Arabidopsis that contributes substantially to the cell plate.</title>
        <authorList>
            <person name="Chow C.M."/>
            <person name="Neto H."/>
            <person name="Foucart C."/>
            <person name="Moore I."/>
        </authorList>
    </citation>
    <scope>SUBCELLULAR LOCATION</scope>
    <scope>TISSUE SPECIFICITY</scope>
</reference>